<accession>Q899M3</accession>
<name>MSRA_CLOTE</name>
<gene>
    <name evidence="1" type="primary">msrA</name>
    <name type="ordered locus">CTC_00149</name>
</gene>
<feature type="chain" id="PRO_0000138540" description="Peptide methionine sulfoxide reductase MsrA">
    <location>
        <begin position="1"/>
        <end position="164"/>
    </location>
</feature>
<feature type="active site" evidence="1">
    <location>
        <position position="16"/>
    </location>
</feature>
<organism>
    <name type="scientific">Clostridium tetani (strain Massachusetts / E88)</name>
    <dbReference type="NCBI Taxonomy" id="212717"/>
    <lineage>
        <taxon>Bacteria</taxon>
        <taxon>Bacillati</taxon>
        <taxon>Bacillota</taxon>
        <taxon>Clostridia</taxon>
        <taxon>Eubacteriales</taxon>
        <taxon>Clostridiaceae</taxon>
        <taxon>Clostridium</taxon>
    </lineage>
</organism>
<dbReference type="EC" id="1.8.4.11" evidence="1"/>
<dbReference type="EMBL" id="AE015927">
    <property type="protein sequence ID" value="AAO34801.1"/>
    <property type="molecule type" value="Genomic_DNA"/>
</dbReference>
<dbReference type="SMR" id="Q899M3"/>
<dbReference type="STRING" id="212717.CTC_00149"/>
<dbReference type="KEGG" id="ctc:CTC_00149"/>
<dbReference type="HOGENOM" id="CLU_031040_10_2_9"/>
<dbReference type="Proteomes" id="UP000001412">
    <property type="component" value="Chromosome"/>
</dbReference>
<dbReference type="GO" id="GO:0005737">
    <property type="term" value="C:cytoplasm"/>
    <property type="evidence" value="ECO:0007669"/>
    <property type="project" value="TreeGrafter"/>
</dbReference>
<dbReference type="GO" id="GO:0036456">
    <property type="term" value="F:L-methionine-(S)-S-oxide reductase activity"/>
    <property type="evidence" value="ECO:0007669"/>
    <property type="project" value="TreeGrafter"/>
</dbReference>
<dbReference type="GO" id="GO:0008113">
    <property type="term" value="F:peptide-methionine (S)-S-oxide reductase activity"/>
    <property type="evidence" value="ECO:0007669"/>
    <property type="project" value="UniProtKB-UniRule"/>
</dbReference>
<dbReference type="GO" id="GO:0034599">
    <property type="term" value="P:cellular response to oxidative stress"/>
    <property type="evidence" value="ECO:0007669"/>
    <property type="project" value="TreeGrafter"/>
</dbReference>
<dbReference type="GO" id="GO:0036211">
    <property type="term" value="P:protein modification process"/>
    <property type="evidence" value="ECO:0007669"/>
    <property type="project" value="UniProtKB-UniRule"/>
</dbReference>
<dbReference type="Gene3D" id="3.30.1060.10">
    <property type="entry name" value="Peptide methionine sulphoxide reductase MsrA"/>
    <property type="match status" value="1"/>
</dbReference>
<dbReference type="HAMAP" id="MF_01401">
    <property type="entry name" value="MsrA"/>
    <property type="match status" value="1"/>
</dbReference>
<dbReference type="InterPro" id="IPR002569">
    <property type="entry name" value="Met_Sox_Rdtase_MsrA_dom"/>
</dbReference>
<dbReference type="InterPro" id="IPR036509">
    <property type="entry name" value="Met_Sox_Rdtase_MsrA_sf"/>
</dbReference>
<dbReference type="InterPro" id="IPR050162">
    <property type="entry name" value="MsrA_MetSO_reductase"/>
</dbReference>
<dbReference type="NCBIfam" id="TIGR00401">
    <property type="entry name" value="msrA"/>
    <property type="match status" value="1"/>
</dbReference>
<dbReference type="PANTHER" id="PTHR42799">
    <property type="entry name" value="MITOCHONDRIAL PEPTIDE METHIONINE SULFOXIDE REDUCTASE"/>
    <property type="match status" value="1"/>
</dbReference>
<dbReference type="PANTHER" id="PTHR42799:SF2">
    <property type="entry name" value="MITOCHONDRIAL PEPTIDE METHIONINE SULFOXIDE REDUCTASE"/>
    <property type="match status" value="1"/>
</dbReference>
<dbReference type="Pfam" id="PF01625">
    <property type="entry name" value="PMSR"/>
    <property type="match status" value="1"/>
</dbReference>
<dbReference type="SUPFAM" id="SSF55068">
    <property type="entry name" value="Peptide methionine sulfoxide reductase"/>
    <property type="match status" value="1"/>
</dbReference>
<comment type="function">
    <text evidence="1">Has an important function as a repair enzyme for proteins that have been inactivated by oxidation. Catalyzes the reversible oxidation-reduction of methionine sulfoxide in proteins to methionine.</text>
</comment>
<comment type="catalytic activity">
    <reaction evidence="1">
        <text>L-methionyl-[protein] + [thioredoxin]-disulfide + H2O = L-methionyl-(S)-S-oxide-[protein] + [thioredoxin]-dithiol</text>
        <dbReference type="Rhea" id="RHEA:14217"/>
        <dbReference type="Rhea" id="RHEA-COMP:10698"/>
        <dbReference type="Rhea" id="RHEA-COMP:10700"/>
        <dbReference type="Rhea" id="RHEA-COMP:12313"/>
        <dbReference type="Rhea" id="RHEA-COMP:12315"/>
        <dbReference type="ChEBI" id="CHEBI:15377"/>
        <dbReference type="ChEBI" id="CHEBI:16044"/>
        <dbReference type="ChEBI" id="CHEBI:29950"/>
        <dbReference type="ChEBI" id="CHEBI:44120"/>
        <dbReference type="ChEBI" id="CHEBI:50058"/>
        <dbReference type="EC" id="1.8.4.11"/>
    </reaction>
</comment>
<comment type="catalytic activity">
    <reaction evidence="1">
        <text>[thioredoxin]-disulfide + L-methionine + H2O = L-methionine (S)-S-oxide + [thioredoxin]-dithiol</text>
        <dbReference type="Rhea" id="RHEA:19993"/>
        <dbReference type="Rhea" id="RHEA-COMP:10698"/>
        <dbReference type="Rhea" id="RHEA-COMP:10700"/>
        <dbReference type="ChEBI" id="CHEBI:15377"/>
        <dbReference type="ChEBI" id="CHEBI:29950"/>
        <dbReference type="ChEBI" id="CHEBI:50058"/>
        <dbReference type="ChEBI" id="CHEBI:57844"/>
        <dbReference type="ChEBI" id="CHEBI:58772"/>
        <dbReference type="EC" id="1.8.4.11"/>
    </reaction>
</comment>
<comment type="similarity">
    <text evidence="1">Belongs to the MsrA Met sulfoxide reductase family.</text>
</comment>
<evidence type="ECO:0000255" key="1">
    <source>
        <dbReference type="HAMAP-Rule" id="MF_01401"/>
    </source>
</evidence>
<reference key="1">
    <citation type="journal article" date="2003" name="Proc. Natl. Acad. Sci. U.S.A.">
        <title>The genome sequence of Clostridium tetani, the causative agent of tetanus disease.</title>
        <authorList>
            <person name="Brueggemann H."/>
            <person name="Baeumer S."/>
            <person name="Fricke W.F."/>
            <person name="Wiezer A."/>
            <person name="Liesegang H."/>
            <person name="Decker I."/>
            <person name="Herzberg C."/>
            <person name="Martinez-Arias R."/>
            <person name="Merkl R."/>
            <person name="Henne A."/>
            <person name="Gottschalk G."/>
        </authorList>
    </citation>
    <scope>NUCLEOTIDE SEQUENCE [LARGE SCALE GENOMIC DNA]</scope>
    <source>
        <strain>Massachusetts / E88</strain>
    </source>
</reference>
<proteinExistence type="inferred from homology"/>
<sequence length="164" mass="19092">MKGVKFMKEIILAGGCFWGVEEYFSRIYGVVDTKVGYVNGVTKNPSYEEVCNGNTGYAEGCYIKFDESIIGLKRILDKFWDIIDPTILNRQGPDVGHQYRTGIYYYDKEDLDDILKSKDEISKKYDKPIVTEVEKVTYFYLAEEYHQKYLKKNPNGYCHINLDN</sequence>
<keyword id="KW-0560">Oxidoreductase</keyword>
<keyword id="KW-1185">Reference proteome</keyword>
<protein>
    <recommendedName>
        <fullName evidence="1">Peptide methionine sulfoxide reductase MsrA</fullName>
        <shortName evidence="1">Protein-methionine-S-oxide reductase</shortName>
        <ecNumber evidence="1">1.8.4.11</ecNumber>
    </recommendedName>
    <alternativeName>
        <fullName evidence="1">Peptide-methionine (S)-S-oxide reductase</fullName>
        <shortName evidence="1">Peptide Met(O) reductase</shortName>
    </alternativeName>
</protein>